<feature type="chain" id="PRO_0000166435" description="Chalcone--flavanone isomerase 2">
    <location>
        <begin position="1" status="less than"/>
        <end position="197"/>
    </location>
</feature>
<feature type="binding site" evidence="1">
    <location>
        <position position="23"/>
    </location>
    <ligand>
        <name>substrate</name>
    </ligand>
</feature>
<feature type="binding site" evidence="1">
    <location>
        <position position="88"/>
    </location>
    <ligand>
        <name>substrate</name>
    </ligand>
</feature>
<feature type="binding site" evidence="1">
    <location>
        <position position="165"/>
    </location>
    <ligand>
        <name>substrate</name>
    </ligand>
</feature>
<feature type="site" description="Important for catalytic activity" evidence="1">
    <location>
        <position position="81"/>
    </location>
</feature>
<feature type="non-terminal residue">
    <location>
        <position position="1"/>
    </location>
</feature>
<reference key="1">
    <citation type="journal article" date="1994" name="Plant Mol. Biol.">
        <title>Isolation of chalcone synthase and chalcone isomerase cDNAs from alfalfa (Medicago sativa L.): highest transcript levels occur in young roots and root tips.</title>
        <authorList>
            <person name="McKhann H.I."/>
            <person name="Hirsch A.M."/>
        </authorList>
    </citation>
    <scope>NUCLEOTIDE SEQUENCE [MRNA]</scope>
    <source>
        <strain>cv. Iroquois</strain>
    </source>
</reference>
<reference key="2">
    <citation type="journal article" date="1994" name="Plant Mol. Biol.">
        <authorList>
            <person name="McKhann H.I."/>
            <person name="Hirsch A.M."/>
        </authorList>
    </citation>
    <scope>ERRATUM OF PUBMED:8193301</scope>
</reference>
<keyword id="KW-0284">Flavonoid biosynthesis</keyword>
<keyword id="KW-0413">Isomerase</keyword>
<evidence type="ECO:0000250" key="1"/>
<evidence type="ECO:0000305" key="2"/>
<gene>
    <name type="primary">CHI2</name>
    <name type="synonym">CHI-2</name>
</gene>
<proteinExistence type="evidence at transcript level"/>
<protein>
    <recommendedName>
        <fullName>Chalcone--flavanone isomerase 2</fullName>
        <shortName>Chalcone isomerase 2</shortName>
        <ecNumber>5.5.1.6</ecNumber>
    </recommendedName>
</protein>
<name>CFI2_MEDSA</name>
<accession>P28013</accession>
<organism>
    <name type="scientific">Medicago sativa</name>
    <name type="common">Alfalfa</name>
    <dbReference type="NCBI Taxonomy" id="3879"/>
    <lineage>
        <taxon>Eukaryota</taxon>
        <taxon>Viridiplantae</taxon>
        <taxon>Streptophyta</taxon>
        <taxon>Embryophyta</taxon>
        <taxon>Tracheophyta</taxon>
        <taxon>Spermatophyta</taxon>
        <taxon>Magnoliopsida</taxon>
        <taxon>eudicotyledons</taxon>
        <taxon>Gunneridae</taxon>
        <taxon>Pentapetalae</taxon>
        <taxon>rosids</taxon>
        <taxon>fabids</taxon>
        <taxon>Fabales</taxon>
        <taxon>Fabaceae</taxon>
        <taxon>Papilionoideae</taxon>
        <taxon>50 kb inversion clade</taxon>
        <taxon>NPAAA clade</taxon>
        <taxon>Hologalegina</taxon>
        <taxon>IRL clade</taxon>
        <taxon>Trifolieae</taxon>
        <taxon>Medicago</taxon>
    </lineage>
</organism>
<comment type="function">
    <text evidence="1">Catalyzes the intramolecular cyclization of bicyclic chalcones into tricyclic (S)-flavanones. Responsible for the isomerization of 4,2',4',6'-tetrahydroxychalcone (also termed chalcone) into naringenin (By similarity).</text>
</comment>
<comment type="catalytic activity">
    <reaction>
        <text>a chalcone = a flavanone.</text>
        <dbReference type="EC" id="5.5.1.6"/>
    </reaction>
</comment>
<comment type="pathway">
    <text>Secondary metabolite biosynthesis; flavonoid biosynthesis.</text>
</comment>
<comment type="developmental stage">
    <text>Highest expression in young root tips.</text>
</comment>
<comment type="miscellaneous">
    <text>Part of the biosynthetic pathway for all classes of flavonoids, a large class of secondary plant metabolites, many of which are brightly colored.</text>
</comment>
<comment type="similarity">
    <text evidence="2">Belongs to the chalcone isomerase family.</text>
</comment>
<dbReference type="EC" id="5.5.1.6"/>
<dbReference type="EMBL" id="M91080">
    <property type="protein sequence ID" value="AAB41480.1"/>
    <property type="molecule type" value="mRNA"/>
</dbReference>
<dbReference type="SMR" id="P28013"/>
<dbReference type="UniPathway" id="UPA00154"/>
<dbReference type="GO" id="GO:0045430">
    <property type="term" value="F:chalcone isomerase activity"/>
    <property type="evidence" value="ECO:0007669"/>
    <property type="project" value="UniProtKB-EC"/>
</dbReference>
<dbReference type="GO" id="GO:0009813">
    <property type="term" value="P:flavonoid biosynthetic process"/>
    <property type="evidence" value="ECO:0007669"/>
    <property type="project" value="UniProtKB-UniPathway"/>
</dbReference>
<dbReference type="Gene3D" id="1.10.890.20">
    <property type="match status" value="1"/>
</dbReference>
<dbReference type="Gene3D" id="3.50.70.10">
    <property type="match status" value="1"/>
</dbReference>
<dbReference type="InterPro" id="IPR044164">
    <property type="entry name" value="CFI"/>
</dbReference>
<dbReference type="InterPro" id="IPR016087">
    <property type="entry name" value="Chalcone_isomerase"/>
</dbReference>
<dbReference type="InterPro" id="IPR016088">
    <property type="entry name" value="Chalcone_isomerase_3-sand"/>
</dbReference>
<dbReference type="InterPro" id="IPR016089">
    <property type="entry name" value="Chalcone_isomerase_bundle_sf"/>
</dbReference>
<dbReference type="InterPro" id="IPR036298">
    <property type="entry name" value="Chalcone_isomerase_sf"/>
</dbReference>
<dbReference type="PANTHER" id="PTHR28039:SF10">
    <property type="entry name" value="CHALCONE--FLAVANONE ISOMERASE 1A"/>
    <property type="match status" value="1"/>
</dbReference>
<dbReference type="PANTHER" id="PTHR28039">
    <property type="entry name" value="CHALCONE--FLAVONONE ISOMERASE 1-RELATED"/>
    <property type="match status" value="1"/>
</dbReference>
<dbReference type="Pfam" id="PF02431">
    <property type="entry name" value="Chalcone"/>
    <property type="match status" value="1"/>
</dbReference>
<dbReference type="SUPFAM" id="SSF54626">
    <property type="entry name" value="Chalcone isomerase"/>
    <property type="match status" value="1"/>
</dbReference>
<sequence length="197" mass="21309">KSYFLGGAGERGLTIEGNFIKFTAIGVYLEDIAVASLAAKWKGKSSEELLETLDFYRDIISGPFEKLIRGSKIRELSGPEYSRKVMENCVAHLKSVGTYGDAEAEAMQKFAEAFKPVNFPPGASVFYRQSPDGILGLSFSPDTSIPEKEAALIENKAVSSAVLETMIGEHAVSPDLKRCLAARLPALLNEGAFKIGN</sequence>